<gene>
    <name evidence="1" type="primary">iraD</name>
    <name type="ordered locus">SARI_04501</name>
</gene>
<name>IRAD_SALAR</name>
<reference key="1">
    <citation type="submission" date="2007-11" db="EMBL/GenBank/DDBJ databases">
        <authorList>
            <consortium name="The Salmonella enterica serovar Arizonae Genome Sequencing Project"/>
            <person name="McClelland M."/>
            <person name="Sanderson E.K."/>
            <person name="Porwollik S."/>
            <person name="Spieth J."/>
            <person name="Clifton W.S."/>
            <person name="Fulton R."/>
            <person name="Chunyan W."/>
            <person name="Wollam A."/>
            <person name="Shah N."/>
            <person name="Pepin K."/>
            <person name="Bhonagiri V."/>
            <person name="Nash W."/>
            <person name="Johnson M."/>
            <person name="Thiruvilangam P."/>
            <person name="Wilson R."/>
        </authorList>
    </citation>
    <scope>NUCLEOTIDE SEQUENCE [LARGE SCALE GENOMIC DNA]</scope>
    <source>
        <strain>ATCC BAA-731 / CDC346-86 / RSK2980</strain>
    </source>
</reference>
<comment type="function">
    <text evidence="1">Inhibits RpoS proteolysis by regulating RssB activity, thereby increasing the stability of the sigma stress factor RpoS during oxidative stress. Its effect on RpoS stability is due to its interaction with RssB, which probably blocks the interaction of RssB with RpoS, and the consequent delivery of the RssB-RpoS complex to the ClpXP protein degradation pathway.</text>
</comment>
<comment type="subunit">
    <text evidence="1">Interacts with RssB.</text>
</comment>
<comment type="subcellular location">
    <subcellularLocation>
        <location evidence="1">Cytoplasm</location>
    </subcellularLocation>
</comment>
<comment type="similarity">
    <text evidence="1">Belongs to the GpW/Gp25 family. IraD subfamily.</text>
</comment>
<comment type="sequence caution" evidence="2">
    <conflict type="erroneous initiation">
        <sequence resource="EMBL-CDS" id="ABX24275"/>
    </conflict>
</comment>
<sequence length="126" mass="14523">MMTPTIPVSPLDRLLVEGIGPHELVRRKLMCLFNSCASAGGETLPPLLTRGMPEWHGLNVGDKRVLNWFCRELRAAILRYEPRINVLRVSVKDAYHQPLALYLEAILQDEPEPLRLDITYYNGRWR</sequence>
<keyword id="KW-0963">Cytoplasm</keyword>
<keyword id="KW-1185">Reference proteome</keyword>
<keyword id="KW-0346">Stress response</keyword>
<feature type="chain" id="PRO_0000337897" description="Anti-adapter protein IraD">
    <location>
        <begin position="1"/>
        <end position="126"/>
    </location>
</feature>
<protein>
    <recommendedName>
        <fullName evidence="1">Anti-adapter protein IraD</fullName>
    </recommendedName>
</protein>
<evidence type="ECO:0000255" key="1">
    <source>
        <dbReference type="HAMAP-Rule" id="MF_02010"/>
    </source>
</evidence>
<evidence type="ECO:0000305" key="2"/>
<organism>
    <name type="scientific">Salmonella arizonae (strain ATCC BAA-731 / CDC346-86 / RSK2980)</name>
    <dbReference type="NCBI Taxonomy" id="41514"/>
    <lineage>
        <taxon>Bacteria</taxon>
        <taxon>Pseudomonadati</taxon>
        <taxon>Pseudomonadota</taxon>
        <taxon>Gammaproteobacteria</taxon>
        <taxon>Enterobacterales</taxon>
        <taxon>Enterobacteriaceae</taxon>
        <taxon>Salmonella</taxon>
    </lineage>
</organism>
<accession>A9MQN1</accession>
<dbReference type="EMBL" id="CP000880">
    <property type="protein sequence ID" value="ABX24275.1"/>
    <property type="status" value="ALT_INIT"/>
    <property type="molecule type" value="Genomic_DNA"/>
</dbReference>
<dbReference type="SMR" id="A9MQN1"/>
<dbReference type="STRING" id="41514.SARI_04501"/>
<dbReference type="KEGG" id="ses:SARI_04501"/>
<dbReference type="HOGENOM" id="CLU_1977621_0_0_6"/>
<dbReference type="Proteomes" id="UP000002084">
    <property type="component" value="Chromosome"/>
</dbReference>
<dbReference type="GO" id="GO:0005737">
    <property type="term" value="C:cytoplasm"/>
    <property type="evidence" value="ECO:0007669"/>
    <property type="project" value="UniProtKB-SubCell"/>
</dbReference>
<dbReference type="GO" id="GO:0043856">
    <property type="term" value="F:anti-sigma factor antagonist activity"/>
    <property type="evidence" value="ECO:0007669"/>
    <property type="project" value="InterPro"/>
</dbReference>
<dbReference type="GO" id="GO:0034599">
    <property type="term" value="P:cellular response to oxidative stress"/>
    <property type="evidence" value="ECO:0007669"/>
    <property type="project" value="UniProtKB-UniRule"/>
</dbReference>
<dbReference type="GO" id="GO:0006974">
    <property type="term" value="P:DNA damage response"/>
    <property type="evidence" value="ECO:0007669"/>
    <property type="project" value="InterPro"/>
</dbReference>
<dbReference type="HAMAP" id="MF_02010">
    <property type="entry name" value="IraD"/>
    <property type="match status" value="1"/>
</dbReference>
<dbReference type="InterPro" id="IPR023776">
    <property type="entry name" value="Anti-adapt_IraD"/>
</dbReference>
<dbReference type="InterPro" id="IPR007048">
    <property type="entry name" value="IraD/Gp25-like"/>
</dbReference>
<dbReference type="NCBIfam" id="NF010727">
    <property type="entry name" value="PRK14128.1-2"/>
    <property type="match status" value="1"/>
</dbReference>
<dbReference type="Pfam" id="PF04965">
    <property type="entry name" value="GPW_gp25"/>
    <property type="match status" value="1"/>
</dbReference>
<dbReference type="SUPFAM" id="SSF160719">
    <property type="entry name" value="gpW/gp25-like"/>
    <property type="match status" value="1"/>
</dbReference>
<proteinExistence type="inferred from homology"/>